<dbReference type="EC" id="2.3.1.9" evidence="2"/>
<dbReference type="EMBL" id="D89184">
    <property type="protein sequence ID" value="BAA13846.1"/>
    <property type="molecule type" value="mRNA"/>
</dbReference>
<dbReference type="EMBL" id="CU329671">
    <property type="protein sequence ID" value="CAA22123.1"/>
    <property type="molecule type" value="Genomic_DNA"/>
</dbReference>
<dbReference type="PIR" id="T39899">
    <property type="entry name" value="T39899"/>
</dbReference>
<dbReference type="PIR" id="T42741">
    <property type="entry name" value="T42741"/>
</dbReference>
<dbReference type="RefSeq" id="NP_596686.1">
    <property type="nucleotide sequence ID" value="NM_001022609.2"/>
</dbReference>
<dbReference type="SMR" id="Q9UQW6"/>
<dbReference type="BioGRID" id="277142">
    <property type="interactions" value="5"/>
</dbReference>
<dbReference type="FunCoup" id="Q9UQW6">
    <property type="interactions" value="264"/>
</dbReference>
<dbReference type="STRING" id="284812.Q9UQW6"/>
<dbReference type="iPTMnet" id="Q9UQW6"/>
<dbReference type="PaxDb" id="4896-SPBC215.09c.1"/>
<dbReference type="EnsemblFungi" id="SPBC215.09c.1">
    <property type="protein sequence ID" value="SPBC215.09c.1:pep"/>
    <property type="gene ID" value="SPBC215.09c"/>
</dbReference>
<dbReference type="GeneID" id="2540616"/>
<dbReference type="KEGG" id="spo:2540616"/>
<dbReference type="PomBase" id="SPBC215.09c">
    <property type="gene designation" value="erg10"/>
</dbReference>
<dbReference type="VEuPathDB" id="FungiDB:SPBC215.09c"/>
<dbReference type="eggNOG" id="KOG1390">
    <property type="taxonomic scope" value="Eukaryota"/>
</dbReference>
<dbReference type="HOGENOM" id="CLU_031026_0_1_1"/>
<dbReference type="InParanoid" id="Q9UQW6"/>
<dbReference type="OMA" id="ICPSIAI"/>
<dbReference type="PhylomeDB" id="Q9UQW6"/>
<dbReference type="Reactome" id="R-SPO-191273">
    <property type="pathway name" value="Cholesterol biosynthesis"/>
</dbReference>
<dbReference type="UniPathway" id="UPA00058">
    <property type="reaction ID" value="UER00101"/>
</dbReference>
<dbReference type="PRO" id="PR:Q9UQW6"/>
<dbReference type="Proteomes" id="UP000002485">
    <property type="component" value="Chromosome II"/>
</dbReference>
<dbReference type="GO" id="GO:0005829">
    <property type="term" value="C:cytosol"/>
    <property type="evidence" value="ECO:0007005"/>
    <property type="project" value="PomBase"/>
</dbReference>
<dbReference type="GO" id="GO:0005739">
    <property type="term" value="C:mitochondrion"/>
    <property type="evidence" value="ECO:0000318"/>
    <property type="project" value="GO_Central"/>
</dbReference>
<dbReference type="GO" id="GO:0003985">
    <property type="term" value="F:acetyl-CoA C-acetyltransferase activity"/>
    <property type="evidence" value="ECO:0000318"/>
    <property type="project" value="GO_Central"/>
</dbReference>
<dbReference type="GO" id="GO:0046872">
    <property type="term" value="F:metal ion binding"/>
    <property type="evidence" value="ECO:0007669"/>
    <property type="project" value="UniProtKB-KW"/>
</dbReference>
<dbReference type="GO" id="GO:0006696">
    <property type="term" value="P:ergosterol biosynthetic process"/>
    <property type="evidence" value="ECO:0000318"/>
    <property type="project" value="GO_Central"/>
</dbReference>
<dbReference type="GO" id="GO:0010142">
    <property type="term" value="P:farnesyl diphosphate biosynthetic process, mevalonate pathway"/>
    <property type="evidence" value="ECO:0000305"/>
    <property type="project" value="PomBase"/>
</dbReference>
<dbReference type="CDD" id="cd00751">
    <property type="entry name" value="thiolase"/>
    <property type="match status" value="1"/>
</dbReference>
<dbReference type="FunFam" id="3.40.47.10:FF:000007">
    <property type="entry name" value="acetyl-CoA acetyltransferase, mitochondrial"/>
    <property type="match status" value="1"/>
</dbReference>
<dbReference type="Gene3D" id="3.40.47.10">
    <property type="match status" value="1"/>
</dbReference>
<dbReference type="InterPro" id="IPR002155">
    <property type="entry name" value="Thiolase"/>
</dbReference>
<dbReference type="InterPro" id="IPR016039">
    <property type="entry name" value="Thiolase-like"/>
</dbReference>
<dbReference type="InterPro" id="IPR020610">
    <property type="entry name" value="Thiolase_AS"/>
</dbReference>
<dbReference type="InterPro" id="IPR020617">
    <property type="entry name" value="Thiolase_C"/>
</dbReference>
<dbReference type="InterPro" id="IPR020613">
    <property type="entry name" value="Thiolase_CS"/>
</dbReference>
<dbReference type="InterPro" id="IPR020616">
    <property type="entry name" value="Thiolase_N"/>
</dbReference>
<dbReference type="NCBIfam" id="TIGR01930">
    <property type="entry name" value="AcCoA-C-Actrans"/>
    <property type="match status" value="1"/>
</dbReference>
<dbReference type="PANTHER" id="PTHR18919:SF165">
    <property type="entry name" value="ACETYL-COA ACETYLTRANSFERASE"/>
    <property type="match status" value="1"/>
</dbReference>
<dbReference type="PANTHER" id="PTHR18919">
    <property type="entry name" value="ACETYL-COA C-ACYLTRANSFERASE"/>
    <property type="match status" value="1"/>
</dbReference>
<dbReference type="Pfam" id="PF02803">
    <property type="entry name" value="Thiolase_C"/>
    <property type="match status" value="1"/>
</dbReference>
<dbReference type="Pfam" id="PF00108">
    <property type="entry name" value="Thiolase_N"/>
    <property type="match status" value="1"/>
</dbReference>
<dbReference type="PIRSF" id="PIRSF000429">
    <property type="entry name" value="Ac-CoA_Ac_transf"/>
    <property type="match status" value="1"/>
</dbReference>
<dbReference type="SUPFAM" id="SSF53901">
    <property type="entry name" value="Thiolase-like"/>
    <property type="match status" value="2"/>
</dbReference>
<dbReference type="PROSITE" id="PS00737">
    <property type="entry name" value="THIOLASE_2"/>
    <property type="match status" value="1"/>
</dbReference>
<dbReference type="PROSITE" id="PS00099">
    <property type="entry name" value="THIOLASE_3"/>
    <property type="match status" value="1"/>
</dbReference>
<protein>
    <recommendedName>
        <fullName evidence="2">Acetyl-CoA acetyltransferase</fullName>
        <ecNumber evidence="2">2.3.1.9</ecNumber>
    </recommendedName>
    <alternativeName>
        <fullName evidence="2">Acetoacetyl-CoA thiolase</fullName>
    </alternativeName>
    <alternativeName>
        <fullName evidence="2">Ergosterol biosynthesis protein 10</fullName>
    </alternativeName>
</protein>
<name>ERG10_SCHPO</name>
<reference key="1">
    <citation type="journal article" date="1997" name="DNA Res.">
        <title>Identification of open reading frames in Schizosaccharomyces pombe cDNAs.</title>
        <authorList>
            <person name="Yoshioka S."/>
            <person name="Kato K."/>
            <person name="Nakai K."/>
            <person name="Okayama H."/>
            <person name="Nojima H."/>
        </authorList>
    </citation>
    <scope>NUCLEOTIDE SEQUENCE [LARGE SCALE MRNA]</scope>
    <source>
        <strain>PR745</strain>
    </source>
</reference>
<reference key="2">
    <citation type="journal article" date="2002" name="Nature">
        <title>The genome sequence of Schizosaccharomyces pombe.</title>
        <authorList>
            <person name="Wood V."/>
            <person name="Gwilliam R."/>
            <person name="Rajandream M.A."/>
            <person name="Lyne M.H."/>
            <person name="Lyne R."/>
            <person name="Stewart A."/>
            <person name="Sgouros J.G."/>
            <person name="Peat N."/>
            <person name="Hayles J."/>
            <person name="Baker S.G."/>
            <person name="Basham D."/>
            <person name="Bowman S."/>
            <person name="Brooks K."/>
            <person name="Brown D."/>
            <person name="Brown S."/>
            <person name="Chillingworth T."/>
            <person name="Churcher C.M."/>
            <person name="Collins M."/>
            <person name="Connor R."/>
            <person name="Cronin A."/>
            <person name="Davis P."/>
            <person name="Feltwell T."/>
            <person name="Fraser A."/>
            <person name="Gentles S."/>
            <person name="Goble A."/>
            <person name="Hamlin N."/>
            <person name="Harris D.E."/>
            <person name="Hidalgo J."/>
            <person name="Hodgson G."/>
            <person name="Holroyd S."/>
            <person name="Hornsby T."/>
            <person name="Howarth S."/>
            <person name="Huckle E.J."/>
            <person name="Hunt S."/>
            <person name="Jagels K."/>
            <person name="James K.D."/>
            <person name="Jones L."/>
            <person name="Jones M."/>
            <person name="Leather S."/>
            <person name="McDonald S."/>
            <person name="McLean J."/>
            <person name="Mooney P."/>
            <person name="Moule S."/>
            <person name="Mungall K.L."/>
            <person name="Murphy L.D."/>
            <person name="Niblett D."/>
            <person name="Odell C."/>
            <person name="Oliver K."/>
            <person name="O'Neil S."/>
            <person name="Pearson D."/>
            <person name="Quail M.A."/>
            <person name="Rabbinowitsch E."/>
            <person name="Rutherford K.M."/>
            <person name="Rutter S."/>
            <person name="Saunders D."/>
            <person name="Seeger K."/>
            <person name="Sharp S."/>
            <person name="Skelton J."/>
            <person name="Simmonds M.N."/>
            <person name="Squares R."/>
            <person name="Squares S."/>
            <person name="Stevens K."/>
            <person name="Taylor K."/>
            <person name="Taylor R.G."/>
            <person name="Tivey A."/>
            <person name="Walsh S.V."/>
            <person name="Warren T."/>
            <person name="Whitehead S."/>
            <person name="Woodward J.R."/>
            <person name="Volckaert G."/>
            <person name="Aert R."/>
            <person name="Robben J."/>
            <person name="Grymonprez B."/>
            <person name="Weltjens I."/>
            <person name="Vanstreels E."/>
            <person name="Rieger M."/>
            <person name="Schaefer M."/>
            <person name="Mueller-Auer S."/>
            <person name="Gabel C."/>
            <person name="Fuchs M."/>
            <person name="Duesterhoeft A."/>
            <person name="Fritzc C."/>
            <person name="Holzer E."/>
            <person name="Moestl D."/>
            <person name="Hilbert H."/>
            <person name="Borzym K."/>
            <person name="Langer I."/>
            <person name="Beck A."/>
            <person name="Lehrach H."/>
            <person name="Reinhardt R."/>
            <person name="Pohl T.M."/>
            <person name="Eger P."/>
            <person name="Zimmermann W."/>
            <person name="Wedler H."/>
            <person name="Wambutt R."/>
            <person name="Purnelle B."/>
            <person name="Goffeau A."/>
            <person name="Cadieu E."/>
            <person name="Dreano S."/>
            <person name="Gloux S."/>
            <person name="Lelaure V."/>
            <person name="Mottier S."/>
            <person name="Galibert F."/>
            <person name="Aves S.J."/>
            <person name="Xiang Z."/>
            <person name="Hunt C."/>
            <person name="Moore K."/>
            <person name="Hurst S.M."/>
            <person name="Lucas M."/>
            <person name="Rochet M."/>
            <person name="Gaillardin C."/>
            <person name="Tallada V.A."/>
            <person name="Garzon A."/>
            <person name="Thode G."/>
            <person name="Daga R.R."/>
            <person name="Cruzado L."/>
            <person name="Jimenez J."/>
            <person name="Sanchez M."/>
            <person name="del Rey F."/>
            <person name="Benito J."/>
            <person name="Dominguez A."/>
            <person name="Revuelta J.L."/>
            <person name="Moreno S."/>
            <person name="Armstrong J."/>
            <person name="Forsburg S.L."/>
            <person name="Cerutti L."/>
            <person name="Lowe T."/>
            <person name="McCombie W.R."/>
            <person name="Paulsen I."/>
            <person name="Potashkin J."/>
            <person name="Shpakovski G.V."/>
            <person name="Ussery D."/>
            <person name="Barrell B.G."/>
            <person name="Nurse P."/>
        </authorList>
    </citation>
    <scope>NUCLEOTIDE SEQUENCE [LARGE SCALE GENOMIC DNA]</scope>
    <source>
        <strain>972 / ATCC 24843</strain>
    </source>
</reference>
<reference key="3">
    <citation type="journal article" date="1995" name="Yeast">
        <title>Molecular cloning and sequencing of the hcs gene, which encodes 3-hydroxy-3-methylglutaryl coenzyme A synthase of Schizosaccharomyces pombe.</title>
        <authorList>
            <person name="Katayama S."/>
            <person name="Adachi N."/>
            <person name="Takao K."/>
            <person name="Nakagawa T."/>
            <person name="Matsuda H."/>
            <person name="Kawamukai M."/>
        </authorList>
    </citation>
    <scope>FUNCTION</scope>
</reference>
<reference key="4">
    <citation type="journal article" date="1996" name="Yeast">
        <title>Molecular, functional and evolutionary characterization of the gene encoding HMG-CoA reductase in the fission yeast, Schizosaccharomyces pombe.</title>
        <authorList>
            <person name="Lum P.Y."/>
            <person name="Edwards S."/>
            <person name="Wright R."/>
        </authorList>
    </citation>
    <scope>FUNCTION</scope>
</reference>
<reference key="5">
    <citation type="journal article" date="2006" name="Nat. Biotechnol.">
        <title>ORFeome cloning and global analysis of protein localization in the fission yeast Schizosaccharomyces pombe.</title>
        <authorList>
            <person name="Matsuyama A."/>
            <person name="Arai R."/>
            <person name="Yashiroda Y."/>
            <person name="Shirai A."/>
            <person name="Kamata A."/>
            <person name="Sekido S."/>
            <person name="Kobayashi Y."/>
            <person name="Hashimoto A."/>
            <person name="Hamamoto M."/>
            <person name="Hiraoka Y."/>
            <person name="Horinouchi S."/>
            <person name="Yoshida M."/>
        </authorList>
    </citation>
    <scope>SUBCELLULAR LOCATION [LARGE SCALE ANALYSIS]</scope>
</reference>
<evidence type="ECO:0000250" key="1">
    <source>
        <dbReference type="UniProtKB" id="P24752"/>
    </source>
</evidence>
<evidence type="ECO:0000250" key="2">
    <source>
        <dbReference type="UniProtKB" id="P41338"/>
    </source>
</evidence>
<evidence type="ECO:0000255" key="3">
    <source>
        <dbReference type="PROSITE-ProRule" id="PRU10020"/>
    </source>
</evidence>
<evidence type="ECO:0000269" key="4">
    <source>
    </source>
</evidence>
<evidence type="ECO:0000305" key="5"/>
<feature type="chain" id="PRO_0000310395" description="Acetyl-CoA acetyltransferase">
    <location>
        <begin position="1"/>
        <end position="395"/>
    </location>
</feature>
<feature type="active site" description="Acyl-thioester intermediate" evidence="1">
    <location>
        <position position="90"/>
    </location>
</feature>
<feature type="active site" description="Proton acceptor" evidence="3">
    <location>
        <position position="351"/>
    </location>
</feature>
<feature type="active site" description="Proton acceptor" evidence="3">
    <location>
        <position position="381"/>
    </location>
</feature>
<feature type="binding site" evidence="1">
    <location>
        <position position="185"/>
    </location>
    <ligand>
        <name>CoA</name>
        <dbReference type="ChEBI" id="CHEBI:57287"/>
    </ligand>
</feature>
<feature type="binding site" evidence="1">
    <location>
        <position position="185"/>
    </location>
    <ligand>
        <name>K(+)</name>
        <dbReference type="ChEBI" id="CHEBI:29103"/>
    </ligand>
</feature>
<feature type="binding site" evidence="1">
    <location>
        <position position="230"/>
    </location>
    <ligand>
        <name>CoA</name>
        <dbReference type="ChEBI" id="CHEBI:57287"/>
    </ligand>
</feature>
<feature type="binding site" evidence="1">
    <location>
        <position position="246"/>
    </location>
    <ligand>
        <name>K(+)</name>
        <dbReference type="ChEBI" id="CHEBI:29103"/>
    </ligand>
</feature>
<feature type="binding site" evidence="1">
    <location>
        <position position="247"/>
    </location>
    <ligand>
        <name>K(+)</name>
        <dbReference type="ChEBI" id="CHEBI:29103"/>
    </ligand>
</feature>
<feature type="binding site" evidence="1">
    <location>
        <position position="249"/>
    </location>
    <ligand>
        <name>K(+)</name>
        <dbReference type="ChEBI" id="CHEBI:29103"/>
    </ligand>
</feature>
<feature type="binding site" evidence="1">
    <location>
        <position position="250"/>
    </location>
    <ligand>
        <name>CoA</name>
        <dbReference type="ChEBI" id="CHEBI:57287"/>
    </ligand>
</feature>
<feature type="binding site" evidence="1">
    <location>
        <position position="347"/>
    </location>
    <ligand>
        <name>K(+)</name>
        <dbReference type="ChEBI" id="CHEBI:29103"/>
    </ligand>
</feature>
<feature type="sequence conflict" description="In Ref. 1; BAA13846." evidence="5" ref="1">
    <original>A</original>
    <variation>P</variation>
    <location>
        <position position="387"/>
    </location>
</feature>
<organism>
    <name type="scientific">Schizosaccharomyces pombe (strain 972 / ATCC 24843)</name>
    <name type="common">Fission yeast</name>
    <dbReference type="NCBI Taxonomy" id="284812"/>
    <lineage>
        <taxon>Eukaryota</taxon>
        <taxon>Fungi</taxon>
        <taxon>Dikarya</taxon>
        <taxon>Ascomycota</taxon>
        <taxon>Taphrinomycotina</taxon>
        <taxon>Schizosaccharomycetes</taxon>
        <taxon>Schizosaccharomycetales</taxon>
        <taxon>Schizosaccharomycetaceae</taxon>
        <taxon>Schizosaccharomyces</taxon>
    </lineage>
</organism>
<accession>Q9UQW6</accession>
<accession>P78835</accession>
<accession>Q1L848</accession>
<sequence length="395" mass="40998">MVNTEVYIVSAVRTPMGSFGGSFASLPATKLGSIAIKGALERVNIKPSDVDEVFMGNVVSANLGQNPARQCALGAGLPRSIVCTTVNKVCASGMKATILGAQTIMTGNAEIVVAGGTESMSNAPYYAPKNRFGAKYGNVELVDGLLRDGLSDAYDGLPMGNAAELCAEEHSIDRASQDAFAISSYKRAQNAQATKAFEQEIVPVEVPVGRGKPNKLVTEDEEPKNLNEDKLKSVRAVFKSNGTVTAANASTLNDGASALVLMSAAKVKELGLKPLAKIIGWGEAAQDPERFTTSPSLAIPKALKHAGIEASQVDYYEINEAFSVVAVANTKILGLDPERVNINGGGVAMGHPLGSSGSRIICTLAYILAQKDAKIGVAAVCNGGGGASSIVIERV</sequence>
<comment type="function">
    <text evidence="2 5">Acetyl-CoA acetyltransferase; part of the first module of ergosterol biosynthesis pathway that includes the early steps of the pathway, conserved across all eukaryotes, and which results in the formation of mevalonate from acetyl-coenzyme A (acetyl-CoA) (By similarity). Erg10 catalyzes the formation of acetoacetyl-CoA from acetyl-CoA (By similarity). The first module starts with the action of the cytosolic acetyl-CoA acetyltransferase eg10 that catalyzes the formation of acetoacetyl-CoA. The hydroxymethylglutaryl-CoA synthases erg13 then condenses acetyl-CoA with acetoacetyl-CoA to form HMG-CoA. The rate-limiting step of the early module is the reduction to mevalonate by the 3-hydroxy-3-methylglutaryl-coenzyme A (HMG-CoA) reductases hcs1 (Probable).</text>
</comment>
<comment type="catalytic activity">
    <reaction evidence="3">
        <text>2 acetyl-CoA = acetoacetyl-CoA + CoA</text>
        <dbReference type="Rhea" id="RHEA:21036"/>
        <dbReference type="ChEBI" id="CHEBI:57286"/>
        <dbReference type="ChEBI" id="CHEBI:57287"/>
        <dbReference type="ChEBI" id="CHEBI:57288"/>
        <dbReference type="EC" id="2.3.1.9"/>
    </reaction>
    <physiologicalReaction direction="left-to-right" evidence="2">
        <dbReference type="Rhea" id="RHEA:21037"/>
    </physiologicalReaction>
</comment>
<comment type="pathway">
    <text evidence="2">Metabolic intermediate biosynthesis; (R)-mevalonate biosynthesis; (R)-mevalonate from acetyl-CoA: step 1/3.</text>
</comment>
<comment type="subunit">
    <text evidence="2">Homotetramer.</text>
</comment>
<comment type="subcellular location">
    <subcellularLocation>
        <location evidence="4">Cytoplasm</location>
    </subcellularLocation>
</comment>
<comment type="similarity">
    <text evidence="5">Belongs to the thiolase-like superfamily. Thiolase family.</text>
</comment>
<gene>
    <name type="primary">erg10</name>
    <name type="ORF">SPBC215.09c</name>
</gene>
<proteinExistence type="evidence at transcript level"/>
<keyword id="KW-0012">Acyltransferase</keyword>
<keyword id="KW-0963">Cytoplasm</keyword>
<keyword id="KW-0479">Metal-binding</keyword>
<keyword id="KW-0630">Potassium</keyword>
<keyword id="KW-1185">Reference proteome</keyword>
<keyword id="KW-0808">Transferase</keyword>